<sequence length="229" mass="25513">MSQPRPLLSPPETEEQLLAQAQQLSGYTLGELAALAGLVTPENLKRDKGWIGVLLEIWLGASAGSKPEQDFAALGVELKTIPVDSLGRPLETTFVCVAPLTGNSGVTWETSHVRHKLKRVLWIPVEGERSIPLAQRRVGSPLLWTPNEEEDRQLREDWEELMDMIVLGQVERITARHGEYLQIRPKAANAKALTEAIGARGERILTLPRGFYLKKNFTSALLARHFLIQ</sequence>
<reference key="1">
    <citation type="journal article" date="2005" name="Nucleic Acids Res.">
        <title>Genome dynamics and diversity of Shigella species, the etiologic agents of bacillary dysentery.</title>
        <authorList>
            <person name="Yang F."/>
            <person name="Yang J."/>
            <person name="Zhang X."/>
            <person name="Chen L."/>
            <person name="Jiang Y."/>
            <person name="Yan Y."/>
            <person name="Tang X."/>
            <person name="Wang J."/>
            <person name="Xiong Z."/>
            <person name="Dong J."/>
            <person name="Xue Y."/>
            <person name="Zhu Y."/>
            <person name="Xu X."/>
            <person name="Sun L."/>
            <person name="Chen S."/>
            <person name="Nie H."/>
            <person name="Peng J."/>
            <person name="Xu J."/>
            <person name="Wang Y."/>
            <person name="Yuan Z."/>
            <person name="Wen Y."/>
            <person name="Yao Z."/>
            <person name="Shen Y."/>
            <person name="Qiang B."/>
            <person name="Hou Y."/>
            <person name="Yu J."/>
            <person name="Jin Q."/>
        </authorList>
    </citation>
    <scope>NUCLEOTIDE SEQUENCE [LARGE SCALE GENOMIC DNA]</scope>
    <source>
        <strain>Sb227</strain>
    </source>
</reference>
<organism>
    <name type="scientific">Shigella boydii serotype 4 (strain Sb227)</name>
    <dbReference type="NCBI Taxonomy" id="300268"/>
    <lineage>
        <taxon>Bacteria</taxon>
        <taxon>Pseudomonadati</taxon>
        <taxon>Pseudomonadota</taxon>
        <taxon>Gammaproteobacteria</taxon>
        <taxon>Enterobacterales</taxon>
        <taxon>Enterobacteriaceae</taxon>
        <taxon>Shigella</taxon>
    </lineage>
</organism>
<comment type="function">
    <text evidence="1">Sequence-specific endonuclease that cleaves unmethylated GATC sequences. It is involved in DNA mismatch repair.</text>
</comment>
<comment type="subcellular location">
    <subcellularLocation>
        <location evidence="1">Cytoplasm</location>
    </subcellularLocation>
</comment>
<comment type="similarity">
    <text evidence="1">Belongs to the MutH family.</text>
</comment>
<evidence type="ECO:0000255" key="1">
    <source>
        <dbReference type="HAMAP-Rule" id="MF_00759"/>
    </source>
</evidence>
<protein>
    <recommendedName>
        <fullName evidence="1">DNA mismatch repair protein MutH</fullName>
    </recommendedName>
    <alternativeName>
        <fullName evidence="1">Methyl-directed mismatch repair protein</fullName>
    </alternativeName>
</protein>
<gene>
    <name evidence="1" type="primary">mutH</name>
    <name type="ordered locus">SBO_2723</name>
</gene>
<keyword id="KW-0963">Cytoplasm</keyword>
<keyword id="KW-0227">DNA damage</keyword>
<keyword id="KW-0234">DNA repair</keyword>
<keyword id="KW-0255">Endonuclease</keyword>
<keyword id="KW-0378">Hydrolase</keyword>
<keyword id="KW-0540">Nuclease</keyword>
<dbReference type="EMBL" id="CP000036">
    <property type="protein sequence ID" value="ABB67252.1"/>
    <property type="molecule type" value="Genomic_DNA"/>
</dbReference>
<dbReference type="RefSeq" id="WP_000082195.1">
    <property type="nucleotide sequence ID" value="NC_007613.1"/>
</dbReference>
<dbReference type="SMR" id="Q31XF6"/>
<dbReference type="KEGG" id="sbo:SBO_2723"/>
<dbReference type="HOGENOM" id="CLU_086669_0_0_6"/>
<dbReference type="Proteomes" id="UP000007067">
    <property type="component" value="Chromosome"/>
</dbReference>
<dbReference type="GO" id="GO:0005737">
    <property type="term" value="C:cytoplasm"/>
    <property type="evidence" value="ECO:0007669"/>
    <property type="project" value="UniProtKB-SubCell"/>
</dbReference>
<dbReference type="GO" id="GO:0003677">
    <property type="term" value="F:DNA binding"/>
    <property type="evidence" value="ECO:0007669"/>
    <property type="project" value="InterPro"/>
</dbReference>
<dbReference type="GO" id="GO:0004519">
    <property type="term" value="F:endonuclease activity"/>
    <property type="evidence" value="ECO:0007669"/>
    <property type="project" value="UniProtKB-UniRule"/>
</dbReference>
<dbReference type="GO" id="GO:0006304">
    <property type="term" value="P:DNA modification"/>
    <property type="evidence" value="ECO:0007669"/>
    <property type="project" value="InterPro"/>
</dbReference>
<dbReference type="GO" id="GO:0006298">
    <property type="term" value="P:mismatch repair"/>
    <property type="evidence" value="ECO:0007669"/>
    <property type="project" value="UniProtKB-UniRule"/>
</dbReference>
<dbReference type="CDD" id="cd00583">
    <property type="entry name" value="MutH-like"/>
    <property type="match status" value="1"/>
</dbReference>
<dbReference type="FunFam" id="3.40.600.10:FF:000001">
    <property type="entry name" value="DNA mismatch repair protein MutH"/>
    <property type="match status" value="1"/>
</dbReference>
<dbReference type="Gene3D" id="3.40.600.10">
    <property type="entry name" value="DNA mismatch repair MutH/Restriction endonuclease, type II"/>
    <property type="match status" value="1"/>
</dbReference>
<dbReference type="HAMAP" id="MF_00759">
    <property type="entry name" value="MutH"/>
    <property type="match status" value="1"/>
</dbReference>
<dbReference type="InterPro" id="IPR004230">
    <property type="entry name" value="DNA_mismatch_repair_MutH"/>
</dbReference>
<dbReference type="InterPro" id="IPR011337">
    <property type="entry name" value="DNA_rep_MutH/RE_typeII_Sau3AI"/>
</dbReference>
<dbReference type="InterPro" id="IPR037057">
    <property type="entry name" value="DNA_rep_MutH/T2_RE_sf"/>
</dbReference>
<dbReference type="InterPro" id="IPR011335">
    <property type="entry name" value="Restrct_endonuc-II-like"/>
</dbReference>
<dbReference type="NCBIfam" id="TIGR02248">
    <property type="entry name" value="mutH_TIGR"/>
    <property type="match status" value="1"/>
</dbReference>
<dbReference type="NCBIfam" id="NF003458">
    <property type="entry name" value="PRK05070.1"/>
    <property type="match status" value="1"/>
</dbReference>
<dbReference type="Pfam" id="PF02976">
    <property type="entry name" value="MutH"/>
    <property type="match status" value="1"/>
</dbReference>
<dbReference type="SMART" id="SM00927">
    <property type="entry name" value="MutH"/>
    <property type="match status" value="1"/>
</dbReference>
<dbReference type="SUPFAM" id="SSF52980">
    <property type="entry name" value="Restriction endonuclease-like"/>
    <property type="match status" value="1"/>
</dbReference>
<accession>Q31XF6</accession>
<name>MUTH_SHIBS</name>
<proteinExistence type="inferred from homology"/>
<feature type="chain" id="PRO_1000046713" description="DNA mismatch repair protein MutH">
    <location>
        <begin position="1"/>
        <end position="229"/>
    </location>
</feature>